<name>RS15_AYWBP</name>
<keyword id="KW-0687">Ribonucleoprotein</keyword>
<keyword id="KW-0689">Ribosomal protein</keyword>
<keyword id="KW-0694">RNA-binding</keyword>
<keyword id="KW-0699">rRNA-binding</keyword>
<accession>Q2NIP1</accession>
<proteinExistence type="inferred from homology"/>
<feature type="chain" id="PRO_0000354179" description="Small ribosomal subunit protein uS15">
    <location>
        <begin position="1"/>
        <end position="74"/>
    </location>
</feature>
<reference key="1">
    <citation type="journal article" date="2006" name="J. Bacteriol.">
        <title>Living with genome instability: the adaptation of phytoplasmas to diverse environments of their insect and plant hosts.</title>
        <authorList>
            <person name="Bai X."/>
            <person name="Zhang J."/>
            <person name="Ewing A."/>
            <person name="Miller S.A."/>
            <person name="Jancso Radek A."/>
            <person name="Shevchenko D.V."/>
            <person name="Tsukerman K."/>
            <person name="Walunas T."/>
            <person name="Lapidus A."/>
            <person name="Campbell J.W."/>
            <person name="Hogenhout S.A."/>
        </authorList>
    </citation>
    <scope>NUCLEOTIDE SEQUENCE [LARGE SCALE GENOMIC DNA]</scope>
    <source>
        <strain>AYWB</strain>
    </source>
</reference>
<organism>
    <name type="scientific">Aster yellows witches'-broom phytoplasma (strain AYWB)</name>
    <dbReference type="NCBI Taxonomy" id="322098"/>
    <lineage>
        <taxon>Bacteria</taxon>
        <taxon>Bacillati</taxon>
        <taxon>Mycoplasmatota</taxon>
        <taxon>Mollicutes</taxon>
        <taxon>Acholeplasmatales</taxon>
        <taxon>Acholeplasmataceae</taxon>
        <taxon>Candidatus Phytoplasma</taxon>
        <taxon>16SrI (Aster yellows group)</taxon>
    </lineage>
</organism>
<gene>
    <name evidence="1" type="primary">rpsO</name>
    <name type="ordered locus">AYWB_585</name>
</gene>
<protein>
    <recommendedName>
        <fullName evidence="1">Small ribosomal subunit protein uS15</fullName>
    </recommendedName>
    <alternativeName>
        <fullName evidence="2">30S ribosomal protein S15</fullName>
    </alternativeName>
</protein>
<evidence type="ECO:0000255" key="1">
    <source>
        <dbReference type="HAMAP-Rule" id="MF_01343"/>
    </source>
</evidence>
<evidence type="ECO:0000305" key="2"/>
<dbReference type="EMBL" id="CP000061">
    <property type="protein sequence ID" value="ABC65702.1"/>
    <property type="molecule type" value="Genomic_DNA"/>
</dbReference>
<dbReference type="RefSeq" id="WP_011412864.1">
    <property type="nucleotide sequence ID" value="NC_007716.1"/>
</dbReference>
<dbReference type="SMR" id="Q2NIP1"/>
<dbReference type="STRING" id="322098.AYWB_585"/>
<dbReference type="KEGG" id="ayw:AYWB_585"/>
<dbReference type="eggNOG" id="COG0184">
    <property type="taxonomic scope" value="Bacteria"/>
</dbReference>
<dbReference type="HOGENOM" id="CLU_148518_2_0_14"/>
<dbReference type="OrthoDB" id="9799262at2"/>
<dbReference type="PhylomeDB" id="Q2NIP1"/>
<dbReference type="Proteomes" id="UP000001934">
    <property type="component" value="Chromosome"/>
</dbReference>
<dbReference type="GO" id="GO:0022627">
    <property type="term" value="C:cytosolic small ribosomal subunit"/>
    <property type="evidence" value="ECO:0007669"/>
    <property type="project" value="TreeGrafter"/>
</dbReference>
<dbReference type="GO" id="GO:0019843">
    <property type="term" value="F:rRNA binding"/>
    <property type="evidence" value="ECO:0007669"/>
    <property type="project" value="UniProtKB-UniRule"/>
</dbReference>
<dbReference type="GO" id="GO:0003735">
    <property type="term" value="F:structural constituent of ribosome"/>
    <property type="evidence" value="ECO:0007669"/>
    <property type="project" value="InterPro"/>
</dbReference>
<dbReference type="GO" id="GO:0006412">
    <property type="term" value="P:translation"/>
    <property type="evidence" value="ECO:0007669"/>
    <property type="project" value="UniProtKB-UniRule"/>
</dbReference>
<dbReference type="CDD" id="cd00353">
    <property type="entry name" value="Ribosomal_S15p_S13e"/>
    <property type="match status" value="1"/>
</dbReference>
<dbReference type="FunFam" id="1.10.287.10:FF:000002">
    <property type="entry name" value="30S ribosomal protein S15"/>
    <property type="match status" value="1"/>
</dbReference>
<dbReference type="Gene3D" id="1.10.287.10">
    <property type="entry name" value="S15/NS1, RNA-binding"/>
    <property type="match status" value="1"/>
</dbReference>
<dbReference type="HAMAP" id="MF_01343_B">
    <property type="entry name" value="Ribosomal_uS15_B"/>
    <property type="match status" value="1"/>
</dbReference>
<dbReference type="InterPro" id="IPR000589">
    <property type="entry name" value="Ribosomal_uS15"/>
</dbReference>
<dbReference type="InterPro" id="IPR005290">
    <property type="entry name" value="Ribosomal_uS15_bac-type"/>
</dbReference>
<dbReference type="InterPro" id="IPR009068">
    <property type="entry name" value="uS15_NS1_RNA-bd_sf"/>
</dbReference>
<dbReference type="NCBIfam" id="TIGR00952">
    <property type="entry name" value="S15_bact"/>
    <property type="match status" value="1"/>
</dbReference>
<dbReference type="PANTHER" id="PTHR23321">
    <property type="entry name" value="RIBOSOMAL PROTEIN S15, BACTERIAL AND ORGANELLAR"/>
    <property type="match status" value="1"/>
</dbReference>
<dbReference type="PANTHER" id="PTHR23321:SF26">
    <property type="entry name" value="SMALL RIBOSOMAL SUBUNIT PROTEIN US15M"/>
    <property type="match status" value="1"/>
</dbReference>
<dbReference type="Pfam" id="PF00312">
    <property type="entry name" value="Ribosomal_S15"/>
    <property type="match status" value="1"/>
</dbReference>
<dbReference type="SMART" id="SM01387">
    <property type="entry name" value="Ribosomal_S15"/>
    <property type="match status" value="1"/>
</dbReference>
<dbReference type="SUPFAM" id="SSF47060">
    <property type="entry name" value="S15/NS1 RNA-binding domain"/>
    <property type="match status" value="1"/>
</dbReference>
<dbReference type="PROSITE" id="PS00362">
    <property type="entry name" value="RIBOSOMAL_S15"/>
    <property type="match status" value="1"/>
</dbReference>
<sequence length="74" mass="8599">MALTKEQKQEIIKQNSHFAKDTGSSEVQIAILSAEIKQLSEHLKQHPHDFHSKRGLFMKNSKRRNLVKYLANQN</sequence>
<comment type="function">
    <text evidence="1">One of the primary rRNA binding proteins, it binds directly to 16S rRNA where it helps nucleate assembly of the platform of the 30S subunit by binding and bridging several RNA helices of the 16S rRNA.</text>
</comment>
<comment type="function">
    <text evidence="1">Forms an intersubunit bridge (bridge B4) with the 23S rRNA of the 50S subunit in the ribosome.</text>
</comment>
<comment type="subunit">
    <text evidence="1">Part of the 30S ribosomal subunit. Forms a bridge to the 50S subunit in the 70S ribosome, contacting the 23S rRNA.</text>
</comment>
<comment type="similarity">
    <text evidence="1">Belongs to the universal ribosomal protein uS15 family.</text>
</comment>